<feature type="chain" id="PRO_1000128809" description="Large ribosomal subunit protein bL27">
    <location>
        <begin position="1"/>
        <end position="84"/>
    </location>
</feature>
<feature type="region of interest" description="Disordered" evidence="2">
    <location>
        <begin position="1"/>
        <end position="22"/>
    </location>
</feature>
<proteinExistence type="inferred from homology"/>
<keyword id="KW-1185">Reference proteome</keyword>
<keyword id="KW-0687">Ribonucleoprotein</keyword>
<keyword id="KW-0689">Ribosomal protein</keyword>
<dbReference type="EMBL" id="CP000961">
    <property type="protein sequence ID" value="ACA85298.1"/>
    <property type="molecule type" value="Genomic_DNA"/>
</dbReference>
<dbReference type="RefSeq" id="WP_012323645.1">
    <property type="nucleotide sequence ID" value="NC_010506.1"/>
</dbReference>
<dbReference type="SMR" id="B1KGH0"/>
<dbReference type="STRING" id="392500.Swoo_1005"/>
<dbReference type="KEGG" id="swd:Swoo_1005"/>
<dbReference type="eggNOG" id="COG0211">
    <property type="taxonomic scope" value="Bacteria"/>
</dbReference>
<dbReference type="HOGENOM" id="CLU_095424_4_1_6"/>
<dbReference type="Proteomes" id="UP000002168">
    <property type="component" value="Chromosome"/>
</dbReference>
<dbReference type="GO" id="GO:0022625">
    <property type="term" value="C:cytosolic large ribosomal subunit"/>
    <property type="evidence" value="ECO:0007669"/>
    <property type="project" value="TreeGrafter"/>
</dbReference>
<dbReference type="GO" id="GO:0003735">
    <property type="term" value="F:structural constituent of ribosome"/>
    <property type="evidence" value="ECO:0007669"/>
    <property type="project" value="InterPro"/>
</dbReference>
<dbReference type="GO" id="GO:0006412">
    <property type="term" value="P:translation"/>
    <property type="evidence" value="ECO:0007669"/>
    <property type="project" value="UniProtKB-UniRule"/>
</dbReference>
<dbReference type="FunFam" id="2.40.50.100:FF:000001">
    <property type="entry name" value="50S ribosomal protein L27"/>
    <property type="match status" value="1"/>
</dbReference>
<dbReference type="Gene3D" id="2.40.50.100">
    <property type="match status" value="1"/>
</dbReference>
<dbReference type="HAMAP" id="MF_00539">
    <property type="entry name" value="Ribosomal_bL27"/>
    <property type="match status" value="1"/>
</dbReference>
<dbReference type="InterPro" id="IPR001684">
    <property type="entry name" value="Ribosomal_bL27"/>
</dbReference>
<dbReference type="InterPro" id="IPR018261">
    <property type="entry name" value="Ribosomal_bL27_CS"/>
</dbReference>
<dbReference type="NCBIfam" id="TIGR00062">
    <property type="entry name" value="L27"/>
    <property type="match status" value="1"/>
</dbReference>
<dbReference type="PANTHER" id="PTHR15893:SF0">
    <property type="entry name" value="LARGE RIBOSOMAL SUBUNIT PROTEIN BL27M"/>
    <property type="match status" value="1"/>
</dbReference>
<dbReference type="PANTHER" id="PTHR15893">
    <property type="entry name" value="RIBOSOMAL PROTEIN L27"/>
    <property type="match status" value="1"/>
</dbReference>
<dbReference type="Pfam" id="PF01016">
    <property type="entry name" value="Ribosomal_L27"/>
    <property type="match status" value="1"/>
</dbReference>
<dbReference type="PRINTS" id="PR00063">
    <property type="entry name" value="RIBOSOMALL27"/>
</dbReference>
<dbReference type="SUPFAM" id="SSF110324">
    <property type="entry name" value="Ribosomal L27 protein-like"/>
    <property type="match status" value="1"/>
</dbReference>
<dbReference type="PROSITE" id="PS00831">
    <property type="entry name" value="RIBOSOMAL_L27"/>
    <property type="match status" value="1"/>
</dbReference>
<sequence length="84" mass="9049">MAHKKAGGSTRNGRDSESKRLGVKRFGGESVLAGNIIVRQRGTKFHAGVNVGVGRDHTLFALTDGKVKFEVKGPNNRKFISIEG</sequence>
<organism>
    <name type="scientific">Shewanella woodyi (strain ATCC 51908 / MS32)</name>
    <dbReference type="NCBI Taxonomy" id="392500"/>
    <lineage>
        <taxon>Bacteria</taxon>
        <taxon>Pseudomonadati</taxon>
        <taxon>Pseudomonadota</taxon>
        <taxon>Gammaproteobacteria</taxon>
        <taxon>Alteromonadales</taxon>
        <taxon>Shewanellaceae</taxon>
        <taxon>Shewanella</taxon>
    </lineage>
</organism>
<accession>B1KGH0</accession>
<evidence type="ECO:0000255" key="1">
    <source>
        <dbReference type="HAMAP-Rule" id="MF_00539"/>
    </source>
</evidence>
<evidence type="ECO:0000256" key="2">
    <source>
        <dbReference type="SAM" id="MobiDB-lite"/>
    </source>
</evidence>
<evidence type="ECO:0000305" key="3"/>
<comment type="similarity">
    <text evidence="1">Belongs to the bacterial ribosomal protein bL27 family.</text>
</comment>
<gene>
    <name evidence="1" type="primary">rpmA</name>
    <name type="ordered locus">Swoo_1005</name>
</gene>
<protein>
    <recommendedName>
        <fullName evidence="1">Large ribosomal subunit protein bL27</fullName>
    </recommendedName>
    <alternativeName>
        <fullName evidence="3">50S ribosomal protein L27</fullName>
    </alternativeName>
</protein>
<name>RL27_SHEWM</name>
<reference key="1">
    <citation type="submission" date="2008-02" db="EMBL/GenBank/DDBJ databases">
        <title>Complete sequence of Shewanella woodyi ATCC 51908.</title>
        <authorList>
            <consortium name="US DOE Joint Genome Institute"/>
            <person name="Copeland A."/>
            <person name="Lucas S."/>
            <person name="Lapidus A."/>
            <person name="Glavina del Rio T."/>
            <person name="Dalin E."/>
            <person name="Tice H."/>
            <person name="Bruce D."/>
            <person name="Goodwin L."/>
            <person name="Pitluck S."/>
            <person name="Sims D."/>
            <person name="Brettin T."/>
            <person name="Detter J.C."/>
            <person name="Han C."/>
            <person name="Kuske C.R."/>
            <person name="Schmutz J."/>
            <person name="Larimer F."/>
            <person name="Land M."/>
            <person name="Hauser L."/>
            <person name="Kyrpides N."/>
            <person name="Lykidis A."/>
            <person name="Zhao J.-S."/>
            <person name="Richardson P."/>
        </authorList>
    </citation>
    <scope>NUCLEOTIDE SEQUENCE [LARGE SCALE GENOMIC DNA]</scope>
    <source>
        <strain>ATCC 51908 / MS32</strain>
    </source>
</reference>